<proteinExistence type="inferred from homology"/>
<comment type="function">
    <text evidence="1">Catalyzes the attachment of serine to tRNA(Ser). Is also able to aminoacylate tRNA(Sec) with serine, to form the misacylated tRNA L-seryl-tRNA(Sec), which will be further converted into selenocysteinyl-tRNA(Sec).</text>
</comment>
<comment type="catalytic activity">
    <reaction evidence="1">
        <text>tRNA(Ser) + L-serine + ATP = L-seryl-tRNA(Ser) + AMP + diphosphate + H(+)</text>
        <dbReference type="Rhea" id="RHEA:12292"/>
        <dbReference type="Rhea" id="RHEA-COMP:9669"/>
        <dbReference type="Rhea" id="RHEA-COMP:9703"/>
        <dbReference type="ChEBI" id="CHEBI:15378"/>
        <dbReference type="ChEBI" id="CHEBI:30616"/>
        <dbReference type="ChEBI" id="CHEBI:33019"/>
        <dbReference type="ChEBI" id="CHEBI:33384"/>
        <dbReference type="ChEBI" id="CHEBI:78442"/>
        <dbReference type="ChEBI" id="CHEBI:78533"/>
        <dbReference type="ChEBI" id="CHEBI:456215"/>
        <dbReference type="EC" id="6.1.1.11"/>
    </reaction>
</comment>
<comment type="catalytic activity">
    <reaction evidence="1">
        <text>tRNA(Sec) + L-serine + ATP = L-seryl-tRNA(Sec) + AMP + diphosphate + H(+)</text>
        <dbReference type="Rhea" id="RHEA:42580"/>
        <dbReference type="Rhea" id="RHEA-COMP:9742"/>
        <dbReference type="Rhea" id="RHEA-COMP:10128"/>
        <dbReference type="ChEBI" id="CHEBI:15378"/>
        <dbReference type="ChEBI" id="CHEBI:30616"/>
        <dbReference type="ChEBI" id="CHEBI:33019"/>
        <dbReference type="ChEBI" id="CHEBI:33384"/>
        <dbReference type="ChEBI" id="CHEBI:78442"/>
        <dbReference type="ChEBI" id="CHEBI:78533"/>
        <dbReference type="ChEBI" id="CHEBI:456215"/>
        <dbReference type="EC" id="6.1.1.11"/>
    </reaction>
</comment>
<comment type="pathway">
    <text evidence="1">Aminoacyl-tRNA biosynthesis; selenocysteinyl-tRNA(Sec) biosynthesis; L-seryl-tRNA(Sec) from L-serine and tRNA(Sec): step 1/1.</text>
</comment>
<comment type="subunit">
    <text evidence="1">Homodimer. The tRNA molecule binds across the dimer.</text>
</comment>
<comment type="subcellular location">
    <subcellularLocation>
        <location evidence="1">Cytoplasm</location>
    </subcellularLocation>
</comment>
<comment type="domain">
    <text evidence="1">Consists of two distinct domains, a catalytic core and a N-terminal extension that is involved in tRNA binding.</text>
</comment>
<comment type="similarity">
    <text evidence="1">Belongs to the class-II aminoacyl-tRNA synthetase family. Type-1 seryl-tRNA synthetase subfamily.</text>
</comment>
<feature type="chain" id="PRO_1000019843" description="Serine--tRNA ligase">
    <location>
        <begin position="1"/>
        <end position="425"/>
    </location>
</feature>
<feature type="binding site" evidence="1">
    <location>
        <begin position="230"/>
        <end position="232"/>
    </location>
    <ligand>
        <name>L-serine</name>
        <dbReference type="ChEBI" id="CHEBI:33384"/>
    </ligand>
</feature>
<feature type="binding site" evidence="1">
    <location>
        <begin position="261"/>
        <end position="263"/>
    </location>
    <ligand>
        <name>ATP</name>
        <dbReference type="ChEBI" id="CHEBI:30616"/>
    </ligand>
</feature>
<feature type="binding site" evidence="1">
    <location>
        <position position="284"/>
    </location>
    <ligand>
        <name>L-serine</name>
        <dbReference type="ChEBI" id="CHEBI:33384"/>
    </ligand>
</feature>
<feature type="binding site" evidence="1">
    <location>
        <begin position="348"/>
        <end position="351"/>
    </location>
    <ligand>
        <name>ATP</name>
        <dbReference type="ChEBI" id="CHEBI:30616"/>
    </ligand>
</feature>
<feature type="binding site" evidence="1">
    <location>
        <position position="384"/>
    </location>
    <ligand>
        <name>L-serine</name>
        <dbReference type="ChEBI" id="CHEBI:33384"/>
    </ligand>
</feature>
<accession>A3CQ45</accession>
<dbReference type="EC" id="6.1.1.11" evidence="1"/>
<dbReference type="EMBL" id="CP000387">
    <property type="protein sequence ID" value="ABN45300.1"/>
    <property type="molecule type" value="Genomic_DNA"/>
</dbReference>
<dbReference type="RefSeq" id="WP_011837449.1">
    <property type="nucleotide sequence ID" value="NC_009009.1"/>
</dbReference>
<dbReference type="RefSeq" id="YP_001035850.1">
    <property type="nucleotide sequence ID" value="NC_009009.1"/>
</dbReference>
<dbReference type="SMR" id="A3CQ45"/>
<dbReference type="STRING" id="388919.SSA_1925"/>
<dbReference type="KEGG" id="ssa:SSA_1925"/>
<dbReference type="PATRIC" id="fig|388919.9.peg.1824"/>
<dbReference type="eggNOG" id="COG0172">
    <property type="taxonomic scope" value="Bacteria"/>
</dbReference>
<dbReference type="HOGENOM" id="CLU_023797_1_1_9"/>
<dbReference type="OrthoDB" id="9804647at2"/>
<dbReference type="UniPathway" id="UPA00906">
    <property type="reaction ID" value="UER00895"/>
</dbReference>
<dbReference type="Proteomes" id="UP000002148">
    <property type="component" value="Chromosome"/>
</dbReference>
<dbReference type="GO" id="GO:0005737">
    <property type="term" value="C:cytoplasm"/>
    <property type="evidence" value="ECO:0007669"/>
    <property type="project" value="UniProtKB-SubCell"/>
</dbReference>
<dbReference type="GO" id="GO:0005524">
    <property type="term" value="F:ATP binding"/>
    <property type="evidence" value="ECO:0007669"/>
    <property type="project" value="UniProtKB-UniRule"/>
</dbReference>
<dbReference type="GO" id="GO:0140096">
    <property type="term" value="F:catalytic activity, acting on a protein"/>
    <property type="evidence" value="ECO:0007669"/>
    <property type="project" value="UniProtKB-ARBA"/>
</dbReference>
<dbReference type="GO" id="GO:0004828">
    <property type="term" value="F:serine-tRNA ligase activity"/>
    <property type="evidence" value="ECO:0007669"/>
    <property type="project" value="UniProtKB-UniRule"/>
</dbReference>
<dbReference type="GO" id="GO:0016740">
    <property type="term" value="F:transferase activity"/>
    <property type="evidence" value="ECO:0007669"/>
    <property type="project" value="UniProtKB-ARBA"/>
</dbReference>
<dbReference type="GO" id="GO:0016260">
    <property type="term" value="P:selenocysteine biosynthetic process"/>
    <property type="evidence" value="ECO:0007669"/>
    <property type="project" value="UniProtKB-UniRule"/>
</dbReference>
<dbReference type="GO" id="GO:0006434">
    <property type="term" value="P:seryl-tRNA aminoacylation"/>
    <property type="evidence" value="ECO:0007669"/>
    <property type="project" value="UniProtKB-UniRule"/>
</dbReference>
<dbReference type="CDD" id="cd00770">
    <property type="entry name" value="SerRS_core"/>
    <property type="match status" value="1"/>
</dbReference>
<dbReference type="Gene3D" id="3.30.930.10">
    <property type="entry name" value="Bira Bifunctional Protein, Domain 2"/>
    <property type="match status" value="1"/>
</dbReference>
<dbReference type="Gene3D" id="1.10.287.40">
    <property type="entry name" value="Serine-tRNA synthetase, tRNA binding domain"/>
    <property type="match status" value="1"/>
</dbReference>
<dbReference type="HAMAP" id="MF_00176">
    <property type="entry name" value="Ser_tRNA_synth_type1"/>
    <property type="match status" value="1"/>
</dbReference>
<dbReference type="InterPro" id="IPR002314">
    <property type="entry name" value="aa-tRNA-synt_IIb"/>
</dbReference>
<dbReference type="InterPro" id="IPR006195">
    <property type="entry name" value="aa-tRNA-synth_II"/>
</dbReference>
<dbReference type="InterPro" id="IPR045864">
    <property type="entry name" value="aa-tRNA-synth_II/BPL/LPL"/>
</dbReference>
<dbReference type="InterPro" id="IPR002317">
    <property type="entry name" value="Ser-tRNA-ligase_type_1"/>
</dbReference>
<dbReference type="InterPro" id="IPR015866">
    <property type="entry name" value="Ser-tRNA-synth_1_N"/>
</dbReference>
<dbReference type="InterPro" id="IPR042103">
    <property type="entry name" value="SerRS_1_N_sf"/>
</dbReference>
<dbReference type="InterPro" id="IPR033729">
    <property type="entry name" value="SerRS_core"/>
</dbReference>
<dbReference type="InterPro" id="IPR010978">
    <property type="entry name" value="tRNA-bd_arm"/>
</dbReference>
<dbReference type="NCBIfam" id="TIGR00414">
    <property type="entry name" value="serS"/>
    <property type="match status" value="1"/>
</dbReference>
<dbReference type="PANTHER" id="PTHR43697:SF1">
    <property type="entry name" value="SERINE--TRNA LIGASE"/>
    <property type="match status" value="1"/>
</dbReference>
<dbReference type="PANTHER" id="PTHR43697">
    <property type="entry name" value="SERYL-TRNA SYNTHETASE"/>
    <property type="match status" value="1"/>
</dbReference>
<dbReference type="Pfam" id="PF02403">
    <property type="entry name" value="Seryl_tRNA_N"/>
    <property type="match status" value="1"/>
</dbReference>
<dbReference type="Pfam" id="PF00587">
    <property type="entry name" value="tRNA-synt_2b"/>
    <property type="match status" value="1"/>
</dbReference>
<dbReference type="PIRSF" id="PIRSF001529">
    <property type="entry name" value="Ser-tRNA-synth_IIa"/>
    <property type="match status" value="1"/>
</dbReference>
<dbReference type="PRINTS" id="PR00981">
    <property type="entry name" value="TRNASYNTHSER"/>
</dbReference>
<dbReference type="SUPFAM" id="SSF55681">
    <property type="entry name" value="Class II aaRS and biotin synthetases"/>
    <property type="match status" value="1"/>
</dbReference>
<dbReference type="SUPFAM" id="SSF46589">
    <property type="entry name" value="tRNA-binding arm"/>
    <property type="match status" value="1"/>
</dbReference>
<dbReference type="PROSITE" id="PS50862">
    <property type="entry name" value="AA_TRNA_LIGASE_II"/>
    <property type="match status" value="1"/>
</dbReference>
<evidence type="ECO:0000255" key="1">
    <source>
        <dbReference type="HAMAP-Rule" id="MF_00176"/>
    </source>
</evidence>
<name>SYS_STRSV</name>
<gene>
    <name evidence="1" type="primary">serS</name>
    <name type="ordered locus">SSA_1925</name>
</gene>
<protein>
    <recommendedName>
        <fullName evidence="1">Serine--tRNA ligase</fullName>
        <ecNumber evidence="1">6.1.1.11</ecNumber>
    </recommendedName>
    <alternativeName>
        <fullName evidence="1">Seryl-tRNA synthetase</fullName>
        <shortName evidence="1">SerRS</shortName>
    </alternativeName>
    <alternativeName>
        <fullName evidence="1">Seryl-tRNA(Ser/Sec) synthetase</fullName>
    </alternativeName>
</protein>
<organism>
    <name type="scientific">Streptococcus sanguinis (strain SK36)</name>
    <dbReference type="NCBI Taxonomy" id="388919"/>
    <lineage>
        <taxon>Bacteria</taxon>
        <taxon>Bacillati</taxon>
        <taxon>Bacillota</taxon>
        <taxon>Bacilli</taxon>
        <taxon>Lactobacillales</taxon>
        <taxon>Streptococcaceae</taxon>
        <taxon>Streptococcus</taxon>
    </lineage>
</organism>
<sequence length="425" mass="48025">MLDLKRIRTDFDSVAEKLATRGVDAATLSQMKTIDKERRDLLVKVEELKAERNTVSAEIAQAKRNKENTDDKIAAMQKLSAEVKNLDASLAELDAKLTEFTTTLPNIPHDSVPVGADENENVEVRRWGTPHQFDFEAKAHWDLGEDLDILDWERGAKVTGARFLFYKGLGARLERAIYNFMLDEHGKEGYTEVITPYMVNHDSMFGTGQYPKFKEDTFELSDTNFVLIPTAEVPLTNYYRDEILDGKELPIYFTAMSPSFRSEAGSAGRDTRGLIRLHQFHKVEMVKFAKPEESYEELEKMTANAENILQKLNLPYRVVALCTGDMGFSAAKTYDLEVWIPAQNTYREISSCSNTEDFQARRAQIRYRDEADGKVKLLHTLNGSGLAVGRTVAAILENYQNEDGSVTIPEVLRPYMGGLEVIAPK</sequence>
<reference key="1">
    <citation type="journal article" date="2007" name="J. Bacteriol.">
        <title>Genome of the opportunistic pathogen Streptococcus sanguinis.</title>
        <authorList>
            <person name="Xu P."/>
            <person name="Alves J.M."/>
            <person name="Kitten T."/>
            <person name="Brown A."/>
            <person name="Chen Z."/>
            <person name="Ozaki L.S."/>
            <person name="Manque P."/>
            <person name="Ge X."/>
            <person name="Serrano M.G."/>
            <person name="Puiu D."/>
            <person name="Hendricks S."/>
            <person name="Wang Y."/>
            <person name="Chaplin M.D."/>
            <person name="Akan D."/>
            <person name="Paik S."/>
            <person name="Peterson D.L."/>
            <person name="Macrina F.L."/>
            <person name="Buck G.A."/>
        </authorList>
    </citation>
    <scope>NUCLEOTIDE SEQUENCE [LARGE SCALE GENOMIC DNA]</scope>
    <source>
        <strain>SK36</strain>
    </source>
</reference>
<keyword id="KW-0030">Aminoacyl-tRNA synthetase</keyword>
<keyword id="KW-0067">ATP-binding</keyword>
<keyword id="KW-0963">Cytoplasm</keyword>
<keyword id="KW-0436">Ligase</keyword>
<keyword id="KW-0547">Nucleotide-binding</keyword>
<keyword id="KW-0648">Protein biosynthesis</keyword>
<keyword id="KW-1185">Reference proteome</keyword>